<accession>Q1B571</accession>
<organism>
    <name type="scientific">Mycobacterium sp. (strain MCS)</name>
    <dbReference type="NCBI Taxonomy" id="164756"/>
    <lineage>
        <taxon>Bacteria</taxon>
        <taxon>Bacillati</taxon>
        <taxon>Actinomycetota</taxon>
        <taxon>Actinomycetes</taxon>
        <taxon>Mycobacteriales</taxon>
        <taxon>Mycobacteriaceae</taxon>
        <taxon>Mycobacterium</taxon>
    </lineage>
</organism>
<sequence>MSLIREIAGGPYALAAGPDGAMWVTLVHDGAIARVGADGAVDRFPVADGSRPSLISAGPDGALWFTRNGDDRIGRLTTAGELTEFPLSEGSAPFGICAGADGALWFTEMGSGGIGRITVDGQTSGWASVGGTPSMITRGPDDAVWFTLNQGNAIGRLHPRDGVTMRELPTRGAGPVGITATHDDAIWFTEILADKLGRIPLDGALQEIDLPGKPHAVVADPSGGVWVSLWGADRLARVSADGDIETFDLPPGSEPHGLAFGPDGGLWVALESGFVLRMPD</sequence>
<feature type="chain" id="PRO_0000313774" description="Virginiamycin B lyase">
    <location>
        <begin position="1"/>
        <end position="280"/>
    </location>
</feature>
<feature type="active site" description="Proton acceptor" evidence="1">
    <location>
        <position position="256"/>
    </location>
</feature>
<feature type="binding site" evidence="1">
    <location>
        <position position="215"/>
    </location>
    <ligand>
        <name>substrate</name>
    </ligand>
</feature>
<feature type="binding site" evidence="1">
    <location>
        <position position="254"/>
    </location>
    <ligand>
        <name>Mg(2+)</name>
        <dbReference type="ChEBI" id="CHEBI:18420"/>
    </ligand>
</feature>
<feature type="binding site" evidence="1">
    <location>
        <position position="271"/>
    </location>
    <ligand>
        <name>Mg(2+)</name>
        <dbReference type="ChEBI" id="CHEBI:18420"/>
    </ligand>
</feature>
<reference key="1">
    <citation type="submission" date="2006-06" db="EMBL/GenBank/DDBJ databases">
        <title>Complete sequence of chromosome of Mycobacterium sp. MCS.</title>
        <authorList>
            <consortium name="US DOE Joint Genome Institute"/>
            <person name="Copeland A."/>
            <person name="Lucas S."/>
            <person name="Lapidus A."/>
            <person name="Barry K."/>
            <person name="Detter J.C."/>
            <person name="Glavina del Rio T."/>
            <person name="Hammon N."/>
            <person name="Israni S."/>
            <person name="Dalin E."/>
            <person name="Tice H."/>
            <person name="Pitluck S."/>
            <person name="Martinez M."/>
            <person name="Schmutz J."/>
            <person name="Larimer F."/>
            <person name="Land M."/>
            <person name="Hauser L."/>
            <person name="Kyrpides N."/>
            <person name="Kim E."/>
            <person name="Miller C.D."/>
            <person name="Hughes J.E."/>
            <person name="Anderson A.J."/>
            <person name="Sims R.C."/>
            <person name="Richardson P."/>
        </authorList>
    </citation>
    <scope>NUCLEOTIDE SEQUENCE [LARGE SCALE GENOMIC DNA]</scope>
    <source>
        <strain>MCS</strain>
    </source>
</reference>
<proteinExistence type="inferred from homology"/>
<gene>
    <name evidence="1" type="primary">vgb</name>
    <name type="ordered locus">Mmcs_3858</name>
</gene>
<keyword id="KW-0046">Antibiotic resistance</keyword>
<keyword id="KW-0456">Lyase</keyword>
<keyword id="KW-0460">Magnesium</keyword>
<keyword id="KW-0479">Metal-binding</keyword>
<name>VGB_MYCSS</name>
<evidence type="ECO:0000255" key="1">
    <source>
        <dbReference type="HAMAP-Rule" id="MF_01282"/>
    </source>
</evidence>
<protein>
    <recommendedName>
        <fullName evidence="1">Virginiamycin B lyase</fullName>
        <ecNumber evidence="1">4.2.99.-</ecNumber>
    </recommendedName>
    <alternativeName>
        <fullName evidence="1">Streptogramin B lyase</fullName>
    </alternativeName>
</protein>
<comment type="function">
    <text evidence="1">Inactivates the type B streptogramin antibiotics by linearizing the lactone ring at the ester linkage, generating a free phenylglycine carboxylate and converting the threonyl moiety into 2-amino-butenoic acid.</text>
</comment>
<comment type="cofactor">
    <cofactor evidence="1">
        <name>Mg(2+)</name>
        <dbReference type="ChEBI" id="CHEBI:18420"/>
    </cofactor>
</comment>
<comment type="subunit">
    <text evidence="1">Monomer.</text>
</comment>
<comment type="similarity">
    <text evidence="1">Belongs to the Vgb family.</text>
</comment>
<dbReference type="EC" id="4.2.99.-" evidence="1"/>
<dbReference type="EMBL" id="CP000384">
    <property type="protein sequence ID" value="ABG09963.1"/>
    <property type="molecule type" value="Genomic_DNA"/>
</dbReference>
<dbReference type="SMR" id="Q1B571"/>
<dbReference type="KEGG" id="mmc:Mmcs_3858"/>
<dbReference type="HOGENOM" id="CLU_054751_1_0_11"/>
<dbReference type="BioCyc" id="MSP164756:G1G6O-3939-MONOMER"/>
<dbReference type="GO" id="GO:0030288">
    <property type="term" value="C:outer membrane-bounded periplasmic space"/>
    <property type="evidence" value="ECO:0007669"/>
    <property type="project" value="TreeGrafter"/>
</dbReference>
<dbReference type="GO" id="GO:0016835">
    <property type="term" value="F:carbon-oxygen lyase activity"/>
    <property type="evidence" value="ECO:0007669"/>
    <property type="project" value="UniProtKB-UniRule"/>
</dbReference>
<dbReference type="GO" id="GO:0000287">
    <property type="term" value="F:magnesium ion binding"/>
    <property type="evidence" value="ECO:0007669"/>
    <property type="project" value="InterPro"/>
</dbReference>
<dbReference type="GO" id="GO:0017001">
    <property type="term" value="P:antibiotic catabolic process"/>
    <property type="evidence" value="ECO:0007669"/>
    <property type="project" value="UniProtKB-UniRule"/>
</dbReference>
<dbReference type="GO" id="GO:0046677">
    <property type="term" value="P:response to antibiotic"/>
    <property type="evidence" value="ECO:0007669"/>
    <property type="project" value="UniProtKB-KW"/>
</dbReference>
<dbReference type="Gene3D" id="2.130.10.10">
    <property type="entry name" value="YVTN repeat-like/Quinoprotein amine dehydrogenase"/>
    <property type="match status" value="2"/>
</dbReference>
<dbReference type="HAMAP" id="MF_01282">
    <property type="entry name" value="VirginiamycinB_lyase"/>
    <property type="match status" value="1"/>
</dbReference>
<dbReference type="InterPro" id="IPR011044">
    <property type="entry name" value="Quino_amine_DH_bsu"/>
</dbReference>
<dbReference type="InterPro" id="IPR011217">
    <property type="entry name" value="Streptogrm_lyase"/>
</dbReference>
<dbReference type="InterPro" id="IPR051344">
    <property type="entry name" value="Vgb"/>
</dbReference>
<dbReference type="InterPro" id="IPR015943">
    <property type="entry name" value="WD40/YVTN_repeat-like_dom_sf"/>
</dbReference>
<dbReference type="PANTHER" id="PTHR40274">
    <property type="entry name" value="VIRGINIAMYCIN B LYASE"/>
    <property type="match status" value="1"/>
</dbReference>
<dbReference type="PANTHER" id="PTHR40274:SF3">
    <property type="entry name" value="VIRGINIAMYCIN B LYASE"/>
    <property type="match status" value="1"/>
</dbReference>
<dbReference type="Pfam" id="PF24684">
    <property type="entry name" value="Vgb_lyase"/>
    <property type="match status" value="1"/>
</dbReference>
<dbReference type="SUPFAM" id="SSF63829">
    <property type="entry name" value="Calcium-dependent phosphotriesterase"/>
    <property type="match status" value="1"/>
</dbReference>
<dbReference type="SUPFAM" id="SSF50969">
    <property type="entry name" value="YVTN repeat-like/Quinoprotein amine dehydrogenase"/>
    <property type="match status" value="1"/>
</dbReference>